<protein>
    <recommendedName>
        <fullName evidence="1">UPF0303 protein ZMO1353</fullName>
    </recommendedName>
</protein>
<evidence type="ECO:0000255" key="1">
    <source>
        <dbReference type="HAMAP-Rule" id="MF_00761"/>
    </source>
</evidence>
<keyword id="KW-1185">Reference proteome</keyword>
<gene>
    <name type="ordered locus">ZMO1353</name>
    <name type="ORF">zm10orf2</name>
</gene>
<comment type="similarity">
    <text evidence="1">Belongs to the UPF0303 family.</text>
</comment>
<feature type="chain" id="PRO_0000208924" description="UPF0303 protein ZMO1353">
    <location>
        <begin position="1"/>
        <end position="186"/>
    </location>
</feature>
<accession>Q9XBS9</accession>
<accession>Q5NMT3</accession>
<sequence length="186" mass="20451">MGNLQQLALDADIAAVKQQEKLLRLPEFNEDIAWQLGSYIRQIAVQKNYPIAITVARFNQPLFYCAMPNSSPDNKNWLRRKAATVAHYYTSSYAVGLKLKKKGVTTLSGYGLDDKDYATHGGAFPITVEKAGIVGYIAVSGLDQRDDHALVVQALAVHLGLPAEKTALEYLTQDSLGKARLDETIV</sequence>
<name>Y1353_ZYMMO</name>
<proteinExistence type="inferred from homology"/>
<organism>
    <name type="scientific">Zymomonas mobilis subsp. mobilis (strain ATCC 31821 / ZM4 / CP4)</name>
    <dbReference type="NCBI Taxonomy" id="264203"/>
    <lineage>
        <taxon>Bacteria</taxon>
        <taxon>Pseudomonadati</taxon>
        <taxon>Pseudomonadota</taxon>
        <taxon>Alphaproteobacteria</taxon>
        <taxon>Sphingomonadales</taxon>
        <taxon>Zymomonadaceae</taxon>
        <taxon>Zymomonas</taxon>
    </lineage>
</organism>
<dbReference type="EMBL" id="AF157493">
    <property type="protein sequence ID" value="AAD42396.1"/>
    <property type="molecule type" value="Genomic_DNA"/>
</dbReference>
<dbReference type="EMBL" id="AE008692">
    <property type="protein sequence ID" value="AAV89977.1"/>
    <property type="molecule type" value="Genomic_DNA"/>
</dbReference>
<dbReference type="RefSeq" id="WP_011241147.1">
    <property type="nucleotide sequence ID" value="NZ_CP035711.1"/>
</dbReference>
<dbReference type="SMR" id="Q9XBS9"/>
<dbReference type="STRING" id="264203.ZMO1353"/>
<dbReference type="KEGG" id="zmo:ZMO1353"/>
<dbReference type="eggNOG" id="COG4702">
    <property type="taxonomic scope" value="Bacteria"/>
</dbReference>
<dbReference type="HOGENOM" id="CLU_101036_2_2_5"/>
<dbReference type="Proteomes" id="UP000001173">
    <property type="component" value="Chromosome"/>
</dbReference>
<dbReference type="Gene3D" id="3.30.450.150">
    <property type="entry name" value="Haem-degrading domain"/>
    <property type="match status" value="1"/>
</dbReference>
<dbReference type="HAMAP" id="MF_00761">
    <property type="entry name" value="UPF0303"/>
    <property type="match status" value="1"/>
</dbReference>
<dbReference type="InterPro" id="IPR005624">
    <property type="entry name" value="PduO/GlcC-like"/>
</dbReference>
<dbReference type="InterPro" id="IPR038084">
    <property type="entry name" value="PduO/GlcC-like_sf"/>
</dbReference>
<dbReference type="InterPro" id="IPR010371">
    <property type="entry name" value="YBR137W-like"/>
</dbReference>
<dbReference type="NCBIfam" id="NF002696">
    <property type="entry name" value="PRK02487.1-5"/>
    <property type="match status" value="1"/>
</dbReference>
<dbReference type="PANTHER" id="PTHR28255">
    <property type="match status" value="1"/>
</dbReference>
<dbReference type="PANTHER" id="PTHR28255:SF1">
    <property type="entry name" value="UPF0303 PROTEIN YBR137W"/>
    <property type="match status" value="1"/>
</dbReference>
<dbReference type="Pfam" id="PF03928">
    <property type="entry name" value="HbpS-like"/>
    <property type="match status" value="1"/>
</dbReference>
<dbReference type="PIRSF" id="PIRSF008757">
    <property type="entry name" value="UCP008757"/>
    <property type="match status" value="1"/>
</dbReference>
<dbReference type="SUPFAM" id="SSF143744">
    <property type="entry name" value="GlcG-like"/>
    <property type="match status" value="1"/>
</dbReference>
<reference key="1">
    <citation type="submission" date="1999-06" db="EMBL/GenBank/DDBJ databases">
        <authorList>
            <person name="Um H.W."/>
            <person name="Kang H.S."/>
        </authorList>
    </citation>
    <scope>NUCLEOTIDE SEQUENCE [GENOMIC DNA]</scope>
    <source>
        <strain>ATCC 31821 / ZM4 / CP4</strain>
    </source>
</reference>
<reference key="2">
    <citation type="journal article" date="2005" name="Nat. Biotechnol.">
        <title>The genome sequence of the ethanologenic bacterium Zymomonas mobilis ZM4.</title>
        <authorList>
            <person name="Seo J.-S."/>
            <person name="Chong H."/>
            <person name="Park H.S."/>
            <person name="Yoon K.-O."/>
            <person name="Jung C."/>
            <person name="Kim J.J."/>
            <person name="Hong J.H."/>
            <person name="Kim H."/>
            <person name="Kim J.-H."/>
            <person name="Kil J.-I."/>
            <person name="Park C.J."/>
            <person name="Oh H.-M."/>
            <person name="Lee J.-S."/>
            <person name="Jin S.-J."/>
            <person name="Um H.-W."/>
            <person name="Lee H.-J."/>
            <person name="Oh S.-J."/>
            <person name="Kim J.Y."/>
            <person name="Kang H.L."/>
            <person name="Lee S.Y."/>
            <person name="Lee K.J."/>
            <person name="Kang H.S."/>
        </authorList>
    </citation>
    <scope>NUCLEOTIDE SEQUENCE [LARGE SCALE GENOMIC DNA]</scope>
    <source>
        <strain>ATCC 31821 / ZM4 / CP4</strain>
    </source>
</reference>